<evidence type="ECO:0000255" key="1">
    <source>
        <dbReference type="HAMAP-Rule" id="MF_01393"/>
    </source>
</evidence>
<name>ATP6_PROMM</name>
<protein>
    <recommendedName>
        <fullName evidence="1">ATP synthase subunit a</fullName>
    </recommendedName>
    <alternativeName>
        <fullName evidence="1">ATP synthase F0 sector subunit a</fullName>
    </alternativeName>
    <alternativeName>
        <fullName evidence="1">F-ATPase subunit 6</fullName>
    </alternativeName>
</protein>
<gene>
    <name evidence="1" type="primary">atpB</name>
    <name evidence="1" type="synonym">atpI</name>
    <name type="ordered locus">PMT_1472</name>
</gene>
<keyword id="KW-0066">ATP synthesis</keyword>
<keyword id="KW-0138">CF(0)</keyword>
<keyword id="KW-0375">Hydrogen ion transport</keyword>
<keyword id="KW-0406">Ion transport</keyword>
<keyword id="KW-0472">Membrane</keyword>
<keyword id="KW-1185">Reference proteome</keyword>
<keyword id="KW-0793">Thylakoid</keyword>
<keyword id="KW-0812">Transmembrane</keyword>
<keyword id="KW-1133">Transmembrane helix</keyword>
<keyword id="KW-0813">Transport</keyword>
<accession>Q7V5S2</accession>
<sequence length="241" mass="27177">MGFLPIALPFAELEVGQHLYWQIGNLQLHGQVFMTSWIVIGAILALVVVGTRKMERDPHGVQNLLEFLWDYIRDLARTQIGEKAYRDWMPFIGTLFLFIFVSNWGGSLVPWKLIHLPSGELGAPTADINTTVALALLVSLSYFYAGLSRKGLRYFEYYVHPTPIMIPFKIVEDFTKPLSLSFRLFGNILADELVVAVLVFLVPLFLPVPVMFLGLFTSAIQALIFATLAAYYIGEAVEEHH</sequence>
<dbReference type="EMBL" id="BX548175">
    <property type="protein sequence ID" value="CAE21647.1"/>
    <property type="molecule type" value="Genomic_DNA"/>
</dbReference>
<dbReference type="RefSeq" id="WP_011130840.1">
    <property type="nucleotide sequence ID" value="NC_005071.1"/>
</dbReference>
<dbReference type="SMR" id="Q7V5S2"/>
<dbReference type="KEGG" id="pmt:PMT_1472"/>
<dbReference type="eggNOG" id="COG0356">
    <property type="taxonomic scope" value="Bacteria"/>
</dbReference>
<dbReference type="HOGENOM" id="CLU_041018_2_4_3"/>
<dbReference type="OrthoDB" id="9789241at2"/>
<dbReference type="Proteomes" id="UP000001423">
    <property type="component" value="Chromosome"/>
</dbReference>
<dbReference type="GO" id="GO:0031676">
    <property type="term" value="C:plasma membrane-derived thylakoid membrane"/>
    <property type="evidence" value="ECO:0007669"/>
    <property type="project" value="UniProtKB-SubCell"/>
</dbReference>
<dbReference type="GO" id="GO:0045259">
    <property type="term" value="C:proton-transporting ATP synthase complex"/>
    <property type="evidence" value="ECO:0007669"/>
    <property type="project" value="UniProtKB-KW"/>
</dbReference>
<dbReference type="GO" id="GO:0046933">
    <property type="term" value="F:proton-transporting ATP synthase activity, rotational mechanism"/>
    <property type="evidence" value="ECO:0007669"/>
    <property type="project" value="UniProtKB-UniRule"/>
</dbReference>
<dbReference type="CDD" id="cd00310">
    <property type="entry name" value="ATP-synt_Fo_a_6"/>
    <property type="match status" value="1"/>
</dbReference>
<dbReference type="FunFam" id="1.20.120.220:FF:000001">
    <property type="entry name" value="ATP synthase subunit a, chloroplastic"/>
    <property type="match status" value="1"/>
</dbReference>
<dbReference type="Gene3D" id="1.20.120.220">
    <property type="entry name" value="ATP synthase, F0 complex, subunit A"/>
    <property type="match status" value="1"/>
</dbReference>
<dbReference type="HAMAP" id="MF_01393">
    <property type="entry name" value="ATP_synth_a_bact"/>
    <property type="match status" value="1"/>
</dbReference>
<dbReference type="InterPro" id="IPR045082">
    <property type="entry name" value="ATP_syn_F0_a_bact/chloroplast"/>
</dbReference>
<dbReference type="InterPro" id="IPR000568">
    <property type="entry name" value="ATP_synth_F0_asu"/>
</dbReference>
<dbReference type="InterPro" id="IPR023011">
    <property type="entry name" value="ATP_synth_F0_asu_AS"/>
</dbReference>
<dbReference type="InterPro" id="IPR035908">
    <property type="entry name" value="F0_ATP_A_sf"/>
</dbReference>
<dbReference type="NCBIfam" id="TIGR01131">
    <property type="entry name" value="ATP_synt_6_or_A"/>
    <property type="match status" value="1"/>
</dbReference>
<dbReference type="PANTHER" id="PTHR42823">
    <property type="entry name" value="ATP SYNTHASE SUBUNIT A, CHLOROPLASTIC"/>
    <property type="match status" value="1"/>
</dbReference>
<dbReference type="PANTHER" id="PTHR42823:SF3">
    <property type="entry name" value="ATP SYNTHASE SUBUNIT A, CHLOROPLASTIC"/>
    <property type="match status" value="1"/>
</dbReference>
<dbReference type="Pfam" id="PF00119">
    <property type="entry name" value="ATP-synt_A"/>
    <property type="match status" value="1"/>
</dbReference>
<dbReference type="PRINTS" id="PR00123">
    <property type="entry name" value="ATPASEA"/>
</dbReference>
<dbReference type="SUPFAM" id="SSF81336">
    <property type="entry name" value="F1F0 ATP synthase subunit A"/>
    <property type="match status" value="1"/>
</dbReference>
<dbReference type="PROSITE" id="PS00449">
    <property type="entry name" value="ATPASE_A"/>
    <property type="match status" value="1"/>
</dbReference>
<proteinExistence type="inferred from homology"/>
<organism>
    <name type="scientific">Prochlorococcus marinus (strain MIT 9313)</name>
    <dbReference type="NCBI Taxonomy" id="74547"/>
    <lineage>
        <taxon>Bacteria</taxon>
        <taxon>Bacillati</taxon>
        <taxon>Cyanobacteriota</taxon>
        <taxon>Cyanophyceae</taxon>
        <taxon>Synechococcales</taxon>
        <taxon>Prochlorococcaceae</taxon>
        <taxon>Prochlorococcus</taxon>
    </lineage>
</organism>
<feature type="chain" id="PRO_0000362381" description="ATP synthase subunit a">
    <location>
        <begin position="1"/>
        <end position="241"/>
    </location>
</feature>
<feature type="transmembrane region" description="Helical" evidence="1">
    <location>
        <begin position="30"/>
        <end position="50"/>
    </location>
</feature>
<feature type="transmembrane region" description="Helical" evidence="1">
    <location>
        <begin position="91"/>
        <end position="111"/>
    </location>
</feature>
<feature type="transmembrane region" description="Helical" evidence="1">
    <location>
        <begin position="128"/>
        <end position="148"/>
    </location>
</feature>
<feature type="transmembrane region" description="Helical" evidence="1">
    <location>
        <begin position="193"/>
        <end position="213"/>
    </location>
</feature>
<feature type="transmembrane region" description="Helical" evidence="1">
    <location>
        <begin position="214"/>
        <end position="234"/>
    </location>
</feature>
<reference key="1">
    <citation type="journal article" date="2003" name="Nature">
        <title>Genome divergence in two Prochlorococcus ecotypes reflects oceanic niche differentiation.</title>
        <authorList>
            <person name="Rocap G."/>
            <person name="Larimer F.W."/>
            <person name="Lamerdin J.E."/>
            <person name="Malfatti S."/>
            <person name="Chain P."/>
            <person name="Ahlgren N.A."/>
            <person name="Arellano A."/>
            <person name="Coleman M."/>
            <person name="Hauser L."/>
            <person name="Hess W.R."/>
            <person name="Johnson Z.I."/>
            <person name="Land M.L."/>
            <person name="Lindell D."/>
            <person name="Post A.F."/>
            <person name="Regala W."/>
            <person name="Shah M."/>
            <person name="Shaw S.L."/>
            <person name="Steglich C."/>
            <person name="Sullivan M.B."/>
            <person name="Ting C.S."/>
            <person name="Tolonen A."/>
            <person name="Webb E.A."/>
            <person name="Zinser E.R."/>
            <person name="Chisholm S.W."/>
        </authorList>
    </citation>
    <scope>NUCLEOTIDE SEQUENCE [LARGE SCALE GENOMIC DNA]</scope>
    <source>
        <strain>MIT 9313</strain>
    </source>
</reference>
<comment type="function">
    <text evidence="1">Key component of the proton channel; it plays a direct role in the translocation of protons across the membrane.</text>
</comment>
<comment type="subunit">
    <text evidence="1">F-type ATPases have 2 components, CF(1) - the catalytic core - and CF(0) - the membrane proton channel. CF(1) has five subunits: alpha(3), beta(3), gamma(1), delta(1), epsilon(1). CF(0) has four main subunits: a, b, b' and c.</text>
</comment>
<comment type="subcellular location">
    <subcellularLocation>
        <location evidence="1">Cellular thylakoid membrane</location>
        <topology evidence="1">Multi-pass membrane protein</topology>
    </subcellularLocation>
</comment>
<comment type="similarity">
    <text evidence="1">Belongs to the ATPase A chain family.</text>
</comment>